<proteinExistence type="inferred from homology"/>
<sequence>MEAKAILRTARISPQKARLVADQVRGLSAERAVNLLKFSDKKAAHLIKKVVESAIANAENNQGADVDELKVKTIMVDEGPSLKRFMARAKGRGTRILKRTSHITVVVGAAK</sequence>
<feature type="chain" id="PRO_0000243229" description="Large ribosomal subunit protein uL22">
    <location>
        <begin position="1"/>
        <end position="111"/>
    </location>
</feature>
<evidence type="ECO:0000255" key="1">
    <source>
        <dbReference type="HAMAP-Rule" id="MF_01331"/>
    </source>
</evidence>
<evidence type="ECO:0000305" key="2"/>
<gene>
    <name evidence="1" type="primary">rplV</name>
    <name type="ordered locus">XCV1004</name>
</gene>
<keyword id="KW-0687">Ribonucleoprotein</keyword>
<keyword id="KW-0689">Ribosomal protein</keyword>
<keyword id="KW-0694">RNA-binding</keyword>
<keyword id="KW-0699">rRNA-binding</keyword>
<dbReference type="EMBL" id="AM039952">
    <property type="protein sequence ID" value="CAJ22635.1"/>
    <property type="molecule type" value="Genomic_DNA"/>
</dbReference>
<dbReference type="RefSeq" id="WP_003486710.1">
    <property type="nucleotide sequence ID" value="NZ_CP017190.1"/>
</dbReference>
<dbReference type="SMR" id="Q3BWX8"/>
<dbReference type="STRING" id="456327.BJD11_17715"/>
<dbReference type="GeneID" id="93990199"/>
<dbReference type="KEGG" id="xcv:XCV1004"/>
<dbReference type="eggNOG" id="COG0091">
    <property type="taxonomic scope" value="Bacteria"/>
</dbReference>
<dbReference type="HOGENOM" id="CLU_083987_3_3_6"/>
<dbReference type="Proteomes" id="UP000007069">
    <property type="component" value="Chromosome"/>
</dbReference>
<dbReference type="GO" id="GO:0022625">
    <property type="term" value="C:cytosolic large ribosomal subunit"/>
    <property type="evidence" value="ECO:0007669"/>
    <property type="project" value="TreeGrafter"/>
</dbReference>
<dbReference type="GO" id="GO:0019843">
    <property type="term" value="F:rRNA binding"/>
    <property type="evidence" value="ECO:0007669"/>
    <property type="project" value="UniProtKB-UniRule"/>
</dbReference>
<dbReference type="GO" id="GO:0003735">
    <property type="term" value="F:structural constituent of ribosome"/>
    <property type="evidence" value="ECO:0007669"/>
    <property type="project" value="InterPro"/>
</dbReference>
<dbReference type="GO" id="GO:0006412">
    <property type="term" value="P:translation"/>
    <property type="evidence" value="ECO:0007669"/>
    <property type="project" value="UniProtKB-UniRule"/>
</dbReference>
<dbReference type="CDD" id="cd00336">
    <property type="entry name" value="Ribosomal_L22"/>
    <property type="match status" value="1"/>
</dbReference>
<dbReference type="FunFam" id="3.90.470.10:FF:000001">
    <property type="entry name" value="50S ribosomal protein L22"/>
    <property type="match status" value="1"/>
</dbReference>
<dbReference type="Gene3D" id="3.90.470.10">
    <property type="entry name" value="Ribosomal protein L22/L17"/>
    <property type="match status" value="1"/>
</dbReference>
<dbReference type="HAMAP" id="MF_01331_B">
    <property type="entry name" value="Ribosomal_uL22_B"/>
    <property type="match status" value="1"/>
</dbReference>
<dbReference type="InterPro" id="IPR001063">
    <property type="entry name" value="Ribosomal_uL22"/>
</dbReference>
<dbReference type="InterPro" id="IPR005727">
    <property type="entry name" value="Ribosomal_uL22_bac/chlpt-type"/>
</dbReference>
<dbReference type="InterPro" id="IPR047867">
    <property type="entry name" value="Ribosomal_uL22_bac/org-type"/>
</dbReference>
<dbReference type="InterPro" id="IPR018260">
    <property type="entry name" value="Ribosomal_uL22_CS"/>
</dbReference>
<dbReference type="InterPro" id="IPR036394">
    <property type="entry name" value="Ribosomal_uL22_sf"/>
</dbReference>
<dbReference type="NCBIfam" id="TIGR01044">
    <property type="entry name" value="rplV_bact"/>
    <property type="match status" value="1"/>
</dbReference>
<dbReference type="PANTHER" id="PTHR13501">
    <property type="entry name" value="CHLOROPLAST 50S RIBOSOMAL PROTEIN L22-RELATED"/>
    <property type="match status" value="1"/>
</dbReference>
<dbReference type="PANTHER" id="PTHR13501:SF8">
    <property type="entry name" value="LARGE RIBOSOMAL SUBUNIT PROTEIN UL22M"/>
    <property type="match status" value="1"/>
</dbReference>
<dbReference type="Pfam" id="PF00237">
    <property type="entry name" value="Ribosomal_L22"/>
    <property type="match status" value="1"/>
</dbReference>
<dbReference type="SUPFAM" id="SSF54843">
    <property type="entry name" value="Ribosomal protein L22"/>
    <property type="match status" value="1"/>
</dbReference>
<dbReference type="PROSITE" id="PS00464">
    <property type="entry name" value="RIBOSOMAL_L22"/>
    <property type="match status" value="1"/>
</dbReference>
<accession>Q3BWX8</accession>
<comment type="function">
    <text evidence="1">This protein binds specifically to 23S rRNA; its binding is stimulated by other ribosomal proteins, e.g. L4, L17, and L20. It is important during the early stages of 50S assembly. It makes multiple contacts with different domains of the 23S rRNA in the assembled 50S subunit and ribosome (By similarity).</text>
</comment>
<comment type="function">
    <text evidence="1">The globular domain of the protein is located near the polypeptide exit tunnel on the outside of the subunit, while an extended beta-hairpin is found that lines the wall of the exit tunnel in the center of the 70S ribosome.</text>
</comment>
<comment type="subunit">
    <text evidence="1">Part of the 50S ribosomal subunit.</text>
</comment>
<comment type="similarity">
    <text evidence="1">Belongs to the universal ribosomal protein uL22 family.</text>
</comment>
<organism>
    <name type="scientific">Xanthomonas euvesicatoria pv. vesicatoria (strain 85-10)</name>
    <name type="common">Xanthomonas campestris pv. vesicatoria</name>
    <dbReference type="NCBI Taxonomy" id="316273"/>
    <lineage>
        <taxon>Bacteria</taxon>
        <taxon>Pseudomonadati</taxon>
        <taxon>Pseudomonadota</taxon>
        <taxon>Gammaproteobacteria</taxon>
        <taxon>Lysobacterales</taxon>
        <taxon>Lysobacteraceae</taxon>
        <taxon>Xanthomonas</taxon>
    </lineage>
</organism>
<protein>
    <recommendedName>
        <fullName evidence="1">Large ribosomal subunit protein uL22</fullName>
    </recommendedName>
    <alternativeName>
        <fullName evidence="2">50S ribosomal protein L22</fullName>
    </alternativeName>
</protein>
<name>RL22_XANE5</name>
<reference key="1">
    <citation type="journal article" date="2005" name="J. Bacteriol.">
        <title>Insights into genome plasticity and pathogenicity of the plant pathogenic Bacterium Xanthomonas campestris pv. vesicatoria revealed by the complete genome sequence.</title>
        <authorList>
            <person name="Thieme F."/>
            <person name="Koebnik R."/>
            <person name="Bekel T."/>
            <person name="Berger C."/>
            <person name="Boch J."/>
            <person name="Buettner D."/>
            <person name="Caldana C."/>
            <person name="Gaigalat L."/>
            <person name="Goesmann A."/>
            <person name="Kay S."/>
            <person name="Kirchner O."/>
            <person name="Lanz C."/>
            <person name="Linke B."/>
            <person name="McHardy A.C."/>
            <person name="Meyer F."/>
            <person name="Mittenhuber G."/>
            <person name="Nies D.H."/>
            <person name="Niesbach-Kloesgen U."/>
            <person name="Patschkowski T."/>
            <person name="Rueckert C."/>
            <person name="Rupp O."/>
            <person name="Schneiker S."/>
            <person name="Schuster S.C."/>
            <person name="Vorhoelter F.J."/>
            <person name="Weber E."/>
            <person name="Puehler A."/>
            <person name="Bonas U."/>
            <person name="Bartels D."/>
            <person name="Kaiser O."/>
        </authorList>
    </citation>
    <scope>NUCLEOTIDE SEQUENCE [LARGE SCALE GENOMIC DNA]</scope>
    <source>
        <strain>85-10</strain>
    </source>
</reference>